<accession>Q5D891</accession>
<evidence type="ECO:0000250" key="1">
    <source>
        <dbReference type="UniProtKB" id="O88763"/>
    </source>
</evidence>
<evidence type="ECO:0000250" key="2">
    <source>
        <dbReference type="UniProtKB" id="Q6PF93"/>
    </source>
</evidence>
<evidence type="ECO:0000250" key="3">
    <source>
        <dbReference type="UniProtKB" id="Q8NEB9"/>
    </source>
</evidence>
<evidence type="ECO:0000250" key="4">
    <source>
        <dbReference type="UniProtKB" id="Q9TXI7"/>
    </source>
</evidence>
<evidence type="ECO:0000255" key="5">
    <source>
        <dbReference type="PROSITE-ProRule" id="PRU00269"/>
    </source>
</evidence>
<evidence type="ECO:0000255" key="6">
    <source>
        <dbReference type="PROSITE-ProRule" id="PRU00878"/>
    </source>
</evidence>
<evidence type="ECO:0000255" key="7">
    <source>
        <dbReference type="PROSITE-ProRule" id="PRU00880"/>
    </source>
</evidence>
<evidence type="ECO:0000256" key="8">
    <source>
        <dbReference type="SAM" id="MobiDB-lite"/>
    </source>
</evidence>
<name>PK3C3_PIG</name>
<gene>
    <name evidence="3" type="primary">PIK3C3</name>
</gene>
<feature type="chain" id="PRO_0000088804" description="Phosphatidylinositol 3-kinase catalytic subunit type 3">
    <location>
        <begin position="1"/>
        <end position="887"/>
    </location>
</feature>
<feature type="domain" description="C2 PI3K-type" evidence="7">
    <location>
        <begin position="35"/>
        <end position="184"/>
    </location>
</feature>
<feature type="domain" description="PIK helical" evidence="6">
    <location>
        <begin position="282"/>
        <end position="520"/>
    </location>
</feature>
<feature type="domain" description="PI3K/PI4K catalytic" evidence="5">
    <location>
        <begin position="605"/>
        <end position="871"/>
    </location>
</feature>
<feature type="region of interest" description="Disordered" evidence="8">
    <location>
        <begin position="150"/>
        <end position="170"/>
    </location>
</feature>
<feature type="region of interest" description="Disordered" evidence="8">
    <location>
        <begin position="416"/>
        <end position="435"/>
    </location>
</feature>
<feature type="region of interest" description="Disordered" evidence="8">
    <location>
        <begin position="446"/>
        <end position="468"/>
    </location>
</feature>
<feature type="region of interest" description="G-loop" evidence="5">
    <location>
        <begin position="611"/>
        <end position="617"/>
    </location>
</feature>
<feature type="region of interest" description="Catalytic loop" evidence="5">
    <location>
        <begin position="740"/>
        <end position="748"/>
    </location>
</feature>
<feature type="region of interest" description="Activation loop" evidence="5">
    <location>
        <begin position="759"/>
        <end position="780"/>
    </location>
</feature>
<feature type="compositionally biased region" description="Polar residues" evidence="8">
    <location>
        <begin position="156"/>
        <end position="170"/>
    </location>
</feature>
<feature type="compositionally biased region" description="Low complexity" evidence="8">
    <location>
        <begin position="423"/>
        <end position="435"/>
    </location>
</feature>
<feature type="compositionally biased region" description="Pro residues" evidence="8">
    <location>
        <begin position="449"/>
        <end position="459"/>
    </location>
</feature>
<feature type="modified residue" description="Phosphothreonine; by AMPK" evidence="2">
    <location>
        <position position="163"/>
    </location>
</feature>
<feature type="modified residue" description="Phosphoserine; by AMPK" evidence="2">
    <location>
        <position position="165"/>
    </location>
</feature>
<feature type="modified residue" description="Phosphoserine" evidence="1">
    <location>
        <position position="244"/>
    </location>
</feature>
<feature type="modified residue" description="Phosphoserine" evidence="3">
    <location>
        <position position="261"/>
    </location>
</feature>
<feature type="modified residue" description="Phosphoserine" evidence="3">
    <location>
        <position position="282"/>
    </location>
</feature>
<keyword id="KW-0067">ATP-binding</keyword>
<keyword id="KW-0072">Autophagy</keyword>
<keyword id="KW-0131">Cell cycle</keyword>
<keyword id="KW-0132">Cell division</keyword>
<keyword id="KW-0968">Cytoplasmic vesicle</keyword>
<keyword id="KW-0967">Endosome</keyword>
<keyword id="KW-0418">Kinase</keyword>
<keyword id="KW-0443">Lipid metabolism</keyword>
<keyword id="KW-0464">Manganese</keyword>
<keyword id="KW-0547">Nucleotide-binding</keyword>
<keyword id="KW-0597">Phosphoprotein</keyword>
<keyword id="KW-1185">Reference proteome</keyword>
<keyword id="KW-0808">Transferase</keyword>
<keyword id="KW-0832">Ubl conjugation</keyword>
<reference key="1">
    <citation type="journal article" date="2005" name="Cytogenet. Genome Res.">
        <title>Assignment of the phosphoinositide-3-kinase, class 3 (PIK3C3) gene to porcine chromosome 6q22--&gt;q23 by somatic cell and radiation hybrid panel mapping.</title>
        <authorList>
            <person name="Kim J.H."/>
            <person name="Lee Y.S."/>
            <person name="Park E.W."/>
            <person name="Seo B.Y."/>
            <person name="Cho I.C."/>
            <person name="Lee J.G."/>
            <person name="Oh S.J."/>
            <person name="Lee J.H."/>
            <person name="Jeon J.T."/>
        </authorList>
    </citation>
    <scope>NUCLEOTIDE SEQUENCE [MRNA]</scope>
</reference>
<dbReference type="EC" id="2.7.1.137" evidence="3"/>
<dbReference type="EMBL" id="AY823302">
    <property type="protein sequence ID" value="AAX12416.1"/>
    <property type="molecule type" value="mRNA"/>
</dbReference>
<dbReference type="RefSeq" id="NP_001012974.1">
    <property type="nucleotide sequence ID" value="NM_001012956.2"/>
</dbReference>
<dbReference type="SMR" id="Q5D891"/>
<dbReference type="FunCoup" id="Q5D891">
    <property type="interactions" value="2472"/>
</dbReference>
<dbReference type="STRING" id="9823.ENSSSCP00000004057"/>
<dbReference type="PaxDb" id="9823-ENSSSCP00000004057"/>
<dbReference type="PeptideAtlas" id="Q5D891"/>
<dbReference type="GeneID" id="503700"/>
<dbReference type="KEGG" id="ssc:503700"/>
<dbReference type="CTD" id="5289"/>
<dbReference type="eggNOG" id="KOG0906">
    <property type="taxonomic scope" value="Eukaryota"/>
</dbReference>
<dbReference type="InParanoid" id="Q5D891"/>
<dbReference type="OrthoDB" id="67688at2759"/>
<dbReference type="Proteomes" id="UP000008227">
    <property type="component" value="Unplaced"/>
</dbReference>
<dbReference type="Proteomes" id="UP000314985">
    <property type="component" value="Unplaced"/>
</dbReference>
<dbReference type="Proteomes" id="UP000694570">
    <property type="component" value="Unplaced"/>
</dbReference>
<dbReference type="Proteomes" id="UP000694571">
    <property type="component" value="Unplaced"/>
</dbReference>
<dbReference type="Proteomes" id="UP000694720">
    <property type="component" value="Unplaced"/>
</dbReference>
<dbReference type="Proteomes" id="UP000694722">
    <property type="component" value="Unplaced"/>
</dbReference>
<dbReference type="Proteomes" id="UP000694723">
    <property type="component" value="Unplaced"/>
</dbReference>
<dbReference type="Proteomes" id="UP000694724">
    <property type="component" value="Unplaced"/>
</dbReference>
<dbReference type="Proteomes" id="UP000694725">
    <property type="component" value="Unplaced"/>
</dbReference>
<dbReference type="Proteomes" id="UP000694726">
    <property type="component" value="Unplaced"/>
</dbReference>
<dbReference type="Proteomes" id="UP000694727">
    <property type="component" value="Unplaced"/>
</dbReference>
<dbReference type="Proteomes" id="UP000694728">
    <property type="component" value="Unplaced"/>
</dbReference>
<dbReference type="GO" id="GO:0005776">
    <property type="term" value="C:autophagosome"/>
    <property type="evidence" value="ECO:0007669"/>
    <property type="project" value="UniProtKB-SubCell"/>
</dbReference>
<dbReference type="GO" id="GO:0005737">
    <property type="term" value="C:cytoplasm"/>
    <property type="evidence" value="ECO:0000318"/>
    <property type="project" value="GO_Central"/>
</dbReference>
<dbReference type="GO" id="GO:0005768">
    <property type="term" value="C:endosome"/>
    <property type="evidence" value="ECO:0000318"/>
    <property type="project" value="GO_Central"/>
</dbReference>
<dbReference type="GO" id="GO:0005770">
    <property type="term" value="C:late endosome"/>
    <property type="evidence" value="ECO:0000250"/>
    <property type="project" value="UniProtKB"/>
</dbReference>
<dbReference type="GO" id="GO:0016020">
    <property type="term" value="C:membrane"/>
    <property type="evidence" value="ECO:0000318"/>
    <property type="project" value="GO_Central"/>
</dbReference>
<dbReference type="GO" id="GO:0030496">
    <property type="term" value="C:midbody"/>
    <property type="evidence" value="ECO:0000250"/>
    <property type="project" value="UniProtKB"/>
</dbReference>
<dbReference type="GO" id="GO:0005777">
    <property type="term" value="C:peroxisome"/>
    <property type="evidence" value="ECO:0000318"/>
    <property type="project" value="GO_Central"/>
</dbReference>
<dbReference type="GO" id="GO:0000407">
    <property type="term" value="C:phagophore assembly site"/>
    <property type="evidence" value="ECO:0000318"/>
    <property type="project" value="GO_Central"/>
</dbReference>
<dbReference type="GO" id="GO:0035032">
    <property type="term" value="C:phosphatidylinositol 3-kinase complex, class III"/>
    <property type="evidence" value="ECO:0000250"/>
    <property type="project" value="UniProtKB"/>
</dbReference>
<dbReference type="GO" id="GO:0034271">
    <property type="term" value="C:phosphatidylinositol 3-kinase complex, class III, type I"/>
    <property type="evidence" value="ECO:0000318"/>
    <property type="project" value="GO_Central"/>
</dbReference>
<dbReference type="GO" id="GO:0034272">
    <property type="term" value="C:phosphatidylinositol 3-kinase complex, class III, type II"/>
    <property type="evidence" value="ECO:0000318"/>
    <property type="project" value="GO_Central"/>
</dbReference>
<dbReference type="GO" id="GO:0016303">
    <property type="term" value="F:1-phosphatidylinositol-3-kinase activity"/>
    <property type="evidence" value="ECO:0000250"/>
    <property type="project" value="UniProtKB"/>
</dbReference>
<dbReference type="GO" id="GO:0005524">
    <property type="term" value="F:ATP binding"/>
    <property type="evidence" value="ECO:0007669"/>
    <property type="project" value="UniProtKB-KW"/>
</dbReference>
<dbReference type="GO" id="GO:0000045">
    <property type="term" value="P:autophagosome assembly"/>
    <property type="evidence" value="ECO:0000318"/>
    <property type="project" value="GO_Central"/>
</dbReference>
<dbReference type="GO" id="GO:0051301">
    <property type="term" value="P:cell division"/>
    <property type="evidence" value="ECO:0007669"/>
    <property type="project" value="UniProtKB-KW"/>
</dbReference>
<dbReference type="GO" id="GO:0042149">
    <property type="term" value="P:cellular response to glucose starvation"/>
    <property type="evidence" value="ECO:0000250"/>
    <property type="project" value="UniProtKB"/>
</dbReference>
<dbReference type="GO" id="GO:0045022">
    <property type="term" value="P:early endosome to late endosome transport"/>
    <property type="evidence" value="ECO:0000250"/>
    <property type="project" value="UniProtKB"/>
</dbReference>
<dbReference type="GO" id="GO:0006897">
    <property type="term" value="P:endocytosis"/>
    <property type="evidence" value="ECO:0000318"/>
    <property type="project" value="GO_Central"/>
</dbReference>
<dbReference type="GO" id="GO:0016236">
    <property type="term" value="P:macroautophagy"/>
    <property type="evidence" value="ECO:0000250"/>
    <property type="project" value="UniProtKB"/>
</dbReference>
<dbReference type="GO" id="GO:0000425">
    <property type="term" value="P:pexophagy"/>
    <property type="evidence" value="ECO:0000318"/>
    <property type="project" value="GO_Central"/>
</dbReference>
<dbReference type="GO" id="GO:0036092">
    <property type="term" value="P:phosphatidylinositol-3-phosphate biosynthetic process"/>
    <property type="evidence" value="ECO:0000318"/>
    <property type="project" value="GO_Central"/>
</dbReference>
<dbReference type="GO" id="GO:0048015">
    <property type="term" value="P:phosphatidylinositol-mediated signaling"/>
    <property type="evidence" value="ECO:0000318"/>
    <property type="project" value="GO_Central"/>
</dbReference>
<dbReference type="GO" id="GO:0032465">
    <property type="term" value="P:regulation of cytokinesis"/>
    <property type="evidence" value="ECO:0000250"/>
    <property type="project" value="UniProtKB"/>
</dbReference>
<dbReference type="CDD" id="cd08397">
    <property type="entry name" value="C2_PI3K_class_III"/>
    <property type="match status" value="1"/>
</dbReference>
<dbReference type="CDD" id="cd00870">
    <property type="entry name" value="PI3Ka_III"/>
    <property type="match status" value="1"/>
</dbReference>
<dbReference type="CDD" id="cd00896">
    <property type="entry name" value="PI3Kc_III"/>
    <property type="match status" value="1"/>
</dbReference>
<dbReference type="FunFam" id="1.10.1070.11:FF:000002">
    <property type="entry name" value="Phosphatidylinositol 3-kinase catalytic subunit type 3"/>
    <property type="match status" value="1"/>
</dbReference>
<dbReference type="FunFam" id="1.25.40.70:FF:000003">
    <property type="entry name" value="Phosphatidylinositol 3-kinase catalytic subunit type 3"/>
    <property type="match status" value="1"/>
</dbReference>
<dbReference type="FunFam" id="2.60.40.150:FF:000043">
    <property type="entry name" value="Phosphatidylinositol 3-kinase catalytic subunit type 3"/>
    <property type="match status" value="1"/>
</dbReference>
<dbReference type="FunFam" id="3.30.1010.10:FF:000002">
    <property type="entry name" value="Phosphatidylinositol 3-kinase catalytic subunit type 3"/>
    <property type="match status" value="1"/>
</dbReference>
<dbReference type="Gene3D" id="2.60.40.150">
    <property type="entry name" value="C2 domain"/>
    <property type="match status" value="1"/>
</dbReference>
<dbReference type="Gene3D" id="1.10.1070.11">
    <property type="entry name" value="Phosphatidylinositol 3-/4-kinase, catalytic domain"/>
    <property type="match status" value="1"/>
</dbReference>
<dbReference type="Gene3D" id="3.30.1010.10">
    <property type="entry name" value="Phosphatidylinositol 3-kinase Catalytic Subunit, Chain A, domain 4"/>
    <property type="match status" value="1"/>
</dbReference>
<dbReference type="Gene3D" id="1.25.40.70">
    <property type="entry name" value="Phosphatidylinositol 3-kinase, accessory domain (PIK)"/>
    <property type="match status" value="1"/>
</dbReference>
<dbReference type="InterPro" id="IPR016024">
    <property type="entry name" value="ARM-type_fold"/>
</dbReference>
<dbReference type="InterPro" id="IPR035892">
    <property type="entry name" value="C2_domain_sf"/>
</dbReference>
<dbReference type="InterPro" id="IPR011009">
    <property type="entry name" value="Kinase-like_dom_sf"/>
</dbReference>
<dbReference type="InterPro" id="IPR000403">
    <property type="entry name" value="PI3/4_kinase_cat_dom"/>
</dbReference>
<dbReference type="InterPro" id="IPR036940">
    <property type="entry name" value="PI3/4_kinase_cat_sf"/>
</dbReference>
<dbReference type="InterPro" id="IPR018936">
    <property type="entry name" value="PI3/4_kinase_CS"/>
</dbReference>
<dbReference type="InterPro" id="IPR002420">
    <property type="entry name" value="PI3K-type_C2_dom"/>
</dbReference>
<dbReference type="InterPro" id="IPR001263">
    <property type="entry name" value="PI3K_accessory_dom"/>
</dbReference>
<dbReference type="InterPro" id="IPR042236">
    <property type="entry name" value="PI3K_accessory_sf"/>
</dbReference>
<dbReference type="InterPro" id="IPR008290">
    <property type="entry name" value="PI3K_Vps34"/>
</dbReference>
<dbReference type="InterPro" id="IPR015433">
    <property type="entry name" value="PI_Kinase"/>
</dbReference>
<dbReference type="PANTHER" id="PTHR10048:SF7">
    <property type="entry name" value="PHOSPHATIDYLINOSITOL 3-KINASE CATALYTIC SUBUNIT TYPE 3"/>
    <property type="match status" value="1"/>
</dbReference>
<dbReference type="PANTHER" id="PTHR10048">
    <property type="entry name" value="PHOSPHATIDYLINOSITOL KINASE"/>
    <property type="match status" value="1"/>
</dbReference>
<dbReference type="Pfam" id="PF00454">
    <property type="entry name" value="PI3_PI4_kinase"/>
    <property type="match status" value="1"/>
</dbReference>
<dbReference type="Pfam" id="PF00792">
    <property type="entry name" value="PI3K_C2"/>
    <property type="match status" value="1"/>
</dbReference>
<dbReference type="Pfam" id="PF00613">
    <property type="entry name" value="PI3Ka"/>
    <property type="match status" value="1"/>
</dbReference>
<dbReference type="PIRSF" id="PIRSF000587">
    <property type="entry name" value="PI3K_Vps34"/>
    <property type="match status" value="1"/>
</dbReference>
<dbReference type="SMART" id="SM00142">
    <property type="entry name" value="PI3K_C2"/>
    <property type="match status" value="1"/>
</dbReference>
<dbReference type="SMART" id="SM00145">
    <property type="entry name" value="PI3Ka"/>
    <property type="match status" value="1"/>
</dbReference>
<dbReference type="SMART" id="SM00146">
    <property type="entry name" value="PI3Kc"/>
    <property type="match status" value="1"/>
</dbReference>
<dbReference type="SUPFAM" id="SSF48371">
    <property type="entry name" value="ARM repeat"/>
    <property type="match status" value="1"/>
</dbReference>
<dbReference type="SUPFAM" id="SSF49562">
    <property type="entry name" value="C2 domain (Calcium/lipid-binding domain, CaLB)"/>
    <property type="match status" value="1"/>
</dbReference>
<dbReference type="SUPFAM" id="SSF56112">
    <property type="entry name" value="Protein kinase-like (PK-like)"/>
    <property type="match status" value="1"/>
</dbReference>
<dbReference type="PROSITE" id="PS51547">
    <property type="entry name" value="C2_PI3K"/>
    <property type="match status" value="1"/>
</dbReference>
<dbReference type="PROSITE" id="PS00915">
    <property type="entry name" value="PI3_4_KINASE_1"/>
    <property type="match status" value="1"/>
</dbReference>
<dbReference type="PROSITE" id="PS00916">
    <property type="entry name" value="PI3_4_KINASE_2"/>
    <property type="match status" value="1"/>
</dbReference>
<dbReference type="PROSITE" id="PS50290">
    <property type="entry name" value="PI3_4_KINASE_3"/>
    <property type="match status" value="1"/>
</dbReference>
<dbReference type="PROSITE" id="PS51545">
    <property type="entry name" value="PIK_HELICAL"/>
    <property type="match status" value="1"/>
</dbReference>
<organism>
    <name type="scientific">Sus scrofa</name>
    <name type="common">Pig</name>
    <dbReference type="NCBI Taxonomy" id="9823"/>
    <lineage>
        <taxon>Eukaryota</taxon>
        <taxon>Metazoa</taxon>
        <taxon>Chordata</taxon>
        <taxon>Craniata</taxon>
        <taxon>Vertebrata</taxon>
        <taxon>Euteleostomi</taxon>
        <taxon>Mammalia</taxon>
        <taxon>Eutheria</taxon>
        <taxon>Laurasiatheria</taxon>
        <taxon>Artiodactyla</taxon>
        <taxon>Suina</taxon>
        <taxon>Suidae</taxon>
        <taxon>Sus</taxon>
    </lineage>
</organism>
<protein>
    <recommendedName>
        <fullName>Phosphatidylinositol 3-kinase catalytic subunit type 3</fullName>
        <shortName>PI3-kinase type 3</shortName>
        <shortName>PI3K type 3</shortName>
        <shortName>PtdIns-3-kinase type 3</shortName>
        <ecNumber evidence="3">2.7.1.137</ecNumber>
    </recommendedName>
    <alternativeName>
        <fullName>Phosphoinositide-3-kinase class 3</fullName>
    </alternativeName>
</protein>
<comment type="function">
    <text evidence="1 3">Catalytic subunit of the PI3K complex that mediates formation of phosphatidylinositol 3-phosphate; different complex forms are believed to play a role in multiple membrane trafficking pathways: PI3KC3-C1 is involved in initiation of autophagosomes and PI3KC3-C2 in maturation of autophagosomes and endocytosis. As part of PI3KC3-C1, promotes endoplasmic reticulum membrane curvature formation prior to vesicle budding. Involved in regulation of degradative endocytic trafficking and required for the abscission step in cytokinesis, probably in the context of PI3KC3-C2. Involved in the transport of lysosomal enzyme precursors to lysosomes. Required for transport from early to late endosomes (By similarity).</text>
</comment>
<comment type="catalytic activity">
    <reaction evidence="3">
        <text>a 1,2-diacyl-sn-glycero-3-phospho-(1D-myo-inositol) + ATP = a 1,2-diacyl-sn-glycero-3-phospho-(1D-myo-inositol-3-phosphate) + ADP + H(+)</text>
        <dbReference type="Rhea" id="RHEA:12709"/>
        <dbReference type="ChEBI" id="CHEBI:15378"/>
        <dbReference type="ChEBI" id="CHEBI:30616"/>
        <dbReference type="ChEBI" id="CHEBI:57880"/>
        <dbReference type="ChEBI" id="CHEBI:58088"/>
        <dbReference type="ChEBI" id="CHEBI:456216"/>
        <dbReference type="EC" id="2.7.1.137"/>
    </reaction>
    <physiologicalReaction direction="left-to-right" evidence="3">
        <dbReference type="Rhea" id="RHEA:12710"/>
    </physiologicalReaction>
</comment>
<comment type="cofactor">
    <cofactor evidence="3">
        <name>Mn(2+)</name>
        <dbReference type="ChEBI" id="CHEBI:29035"/>
    </cofactor>
</comment>
<comment type="subunit">
    <text evidence="2 3 4">Component of the PI3K (PI3KC3/PI3K-III/class III phosphatidylinositol 3-kinase) complex the core of which is composed of the catalytic subunit PIK3C3, the regulatory subunit PIK3R4 and BECN1 associating with additional regulatory/auxiliary subunits to form alternative complex forms. Alternative complex forms containing a fourth regulatory subunit in a mutually exclusive manner are: the PI3K complex I (PI3KC3-C1) containing ATG14, and the PI3K complex II (PI3KC3-C2) containing UVRAG. PI3KC3-C1 displays a V-shaped architecture with PIK3R4 serving as a bridge between PIK3C3 and the ATG14:BECN1 subcomplex. Both, PI3KC3-C1 and PI3KC3-C2, can associate with further regulatory subunits such as RUBCN, SH3GLB1/Bif-1 and AMBRA1. PI3KC3-C1 probably associates with PIK3CB. Interacts with RAB7A in the presence of PIK3R4. Interacts with AMBRA1. Interacts with BECN1P1/BECN2. Interacts with SLAMF1. May be a component of a complex composed of RAB5A (in GDP-bound form), DYN2 and PIK3C3 (By similarity). Interacts with NCKAP1L (By similarity). Interacts with ATG14; this interaction is increased in the absence of TMEM39A (By similarity). Interacts with STEEP1; the interaction is STING1-dependent and required for trafficking of STING1 from the endoplasmic reticulum (By similarity). Interacts with YWHAG (By similarity). Interacts with ARMC3 (By similarity).</text>
</comment>
<comment type="subcellular location">
    <subcellularLocation>
        <location evidence="3">Midbody</location>
    </subcellularLocation>
    <subcellularLocation>
        <location evidence="3">Late endosome</location>
    </subcellularLocation>
    <subcellularLocation>
        <location evidence="3">Cytoplasmic vesicle</location>
        <location evidence="3">Autophagosome</location>
    </subcellularLocation>
    <text evidence="2 3">As component of the PI3K complex I localized to pre-autophagosome structures. As component of the PI3K complex II localized predominantly to endosomes (By similarity). Also localizes to discrete punctae along the ciliary axoneme and to the base of the ciliary axoneme (By similarity).</text>
</comment>
<comment type="PTM">
    <text evidence="3">Ubiquitinated via 'Lys-29'- and 'Lys-48'-linked ubiquitination by UBE3C, promoting its degradation. Deubiquitination by ZRANB1/TRABID promotes its stabilization, leading to autophagosome maturation.</text>
</comment>
<comment type="similarity">
    <text evidence="7">Belongs to the PI3/PI4-kinase family.</text>
</comment>
<sequence>MGEAEKFHYIYSCDLDINVQLKIGSLEGKREQKSYKAVLEDPMLKFSGLYQETCSDLYVTCQVFAEGKPLALPVRTSYKAFSTRWNWNEWLKLPVKYPDLPRNAQVALTIWDVYGPGKAVPVGGTTVSLFGKYGMFRQGMHDLKVWPNVEADGSEPTKTPGRTSSTLSEDQMSRLAKLTKAHRQGHMVKVDWLDRLTFREIEMINESEKRSSNFMYLMVEFRCVKCDDKEYGIVYYEKDGDESSPILTGFEIVKVPDPQMSMENLVESKHHKLARSLRSGPSDHGLKPNAATRDQLNIIVSYPPTKQLTYEEQDLVWKFRYYLTNQEKALTKFLKCVNWDLPQEAKQALELLGKWKPMDVEDSLELLSSHYANPTVRRYAVARLRQADDEDLLMYLLQLVQALKYENFDDIKNGLEPTKKESQGSVSESVSNSGIGSAEIDSSQIITSPLPPVSSPPPASKTKESSDGESLEQDLCTFLISRACKNSTLANYLYWYVIVECEGQDTQQRDPKTHEMYLNVMRRFSQALLKGDKSVRVMRSLLAAQQTFVDRLVHLMKAVQRESGNRKKKNERLQALLGDNEKMNLSDVELIPLPLEPQVKIRGIIPETATLFKSALMPAQLFFKTEDGGKYPVIFKHGDDLRQDQLILQIISLMDKLLRKENLDLKLTPYKVLATSTKHGFMQFIQSVPVAEVLDTEGSIQNFFRKYAPSENGPNGISAEVMDTYVKSCAGYCVITYILGVGDRHLDNLLLTKTGKLFHIDFGYILGRDPKPLPPPMKLNKEMVEGMGGTQSEQYQEFRKQCYTAFLHLRRYSNLILNLFSLMVDANIPDIALEPDKTVKKVQDKFRLDLSDEEAVHYMQSLIDESVHALFAAVVEQIHKFAQYWRK</sequence>
<proteinExistence type="evidence at transcript level"/>